<reference key="1">
    <citation type="submission" date="2009-07" db="EMBL/GenBank/DDBJ databases">
        <title>Complete sequence of Pectobacterium carotovorum subsp. carotovorum PC1.</title>
        <authorList>
            <consortium name="US DOE Joint Genome Institute"/>
            <person name="Lucas S."/>
            <person name="Copeland A."/>
            <person name="Lapidus A."/>
            <person name="Glavina del Rio T."/>
            <person name="Tice H."/>
            <person name="Bruce D."/>
            <person name="Goodwin L."/>
            <person name="Pitluck S."/>
            <person name="Munk A.C."/>
            <person name="Brettin T."/>
            <person name="Detter J.C."/>
            <person name="Han C."/>
            <person name="Tapia R."/>
            <person name="Larimer F."/>
            <person name="Land M."/>
            <person name="Hauser L."/>
            <person name="Kyrpides N."/>
            <person name="Mikhailova N."/>
            <person name="Balakrishnan V."/>
            <person name="Glasner J."/>
            <person name="Perna N.T."/>
        </authorList>
    </citation>
    <scope>NUCLEOTIDE SEQUENCE [LARGE SCALE GENOMIC DNA]</scope>
    <source>
        <strain>PC1</strain>
    </source>
</reference>
<protein>
    <recommendedName>
        <fullName evidence="1">ATP phosphoribosyltransferase</fullName>
        <shortName evidence="1">ATP-PRT</shortName>
        <shortName evidence="1">ATP-PRTase</shortName>
        <ecNumber evidence="1">2.4.2.17</ecNumber>
    </recommendedName>
</protein>
<feature type="chain" id="PRO_1000202535" description="ATP phosphoribosyltransferase">
    <location>
        <begin position="1"/>
        <end position="299"/>
    </location>
</feature>
<dbReference type="EC" id="2.4.2.17" evidence="1"/>
<dbReference type="EMBL" id="CP001657">
    <property type="protein sequence ID" value="ACT12786.1"/>
    <property type="molecule type" value="Genomic_DNA"/>
</dbReference>
<dbReference type="RefSeq" id="WP_015839996.1">
    <property type="nucleotide sequence ID" value="NC_012917.1"/>
</dbReference>
<dbReference type="SMR" id="C6DF77"/>
<dbReference type="STRING" id="561230.PC1_1745"/>
<dbReference type="GeneID" id="67793748"/>
<dbReference type="KEGG" id="pct:PC1_1745"/>
<dbReference type="eggNOG" id="COG0040">
    <property type="taxonomic scope" value="Bacteria"/>
</dbReference>
<dbReference type="HOGENOM" id="CLU_038115_1_0_6"/>
<dbReference type="OrthoDB" id="9801867at2"/>
<dbReference type="UniPathway" id="UPA00031">
    <property type="reaction ID" value="UER00006"/>
</dbReference>
<dbReference type="Proteomes" id="UP000002736">
    <property type="component" value="Chromosome"/>
</dbReference>
<dbReference type="GO" id="GO:0005737">
    <property type="term" value="C:cytoplasm"/>
    <property type="evidence" value="ECO:0007669"/>
    <property type="project" value="UniProtKB-SubCell"/>
</dbReference>
<dbReference type="GO" id="GO:0005524">
    <property type="term" value="F:ATP binding"/>
    <property type="evidence" value="ECO:0007669"/>
    <property type="project" value="UniProtKB-KW"/>
</dbReference>
<dbReference type="GO" id="GO:0003879">
    <property type="term" value="F:ATP phosphoribosyltransferase activity"/>
    <property type="evidence" value="ECO:0007669"/>
    <property type="project" value="UniProtKB-UniRule"/>
</dbReference>
<dbReference type="GO" id="GO:0000287">
    <property type="term" value="F:magnesium ion binding"/>
    <property type="evidence" value="ECO:0007669"/>
    <property type="project" value="UniProtKB-UniRule"/>
</dbReference>
<dbReference type="GO" id="GO:0000105">
    <property type="term" value="P:L-histidine biosynthetic process"/>
    <property type="evidence" value="ECO:0007669"/>
    <property type="project" value="UniProtKB-UniRule"/>
</dbReference>
<dbReference type="CDD" id="cd13592">
    <property type="entry name" value="PBP2_HisGL2"/>
    <property type="match status" value="1"/>
</dbReference>
<dbReference type="FunFam" id="3.30.70.120:FF:000002">
    <property type="entry name" value="ATP phosphoribosyltransferase"/>
    <property type="match status" value="1"/>
</dbReference>
<dbReference type="FunFam" id="3.40.190.10:FF:000008">
    <property type="entry name" value="ATP phosphoribosyltransferase"/>
    <property type="match status" value="1"/>
</dbReference>
<dbReference type="Gene3D" id="3.30.70.120">
    <property type="match status" value="1"/>
</dbReference>
<dbReference type="Gene3D" id="3.40.190.10">
    <property type="entry name" value="Periplasmic binding protein-like II"/>
    <property type="match status" value="2"/>
</dbReference>
<dbReference type="HAMAP" id="MF_00079">
    <property type="entry name" value="HisG_Long"/>
    <property type="match status" value="1"/>
</dbReference>
<dbReference type="InterPro" id="IPR020621">
    <property type="entry name" value="ATP-PRT_HisG_long"/>
</dbReference>
<dbReference type="InterPro" id="IPR013820">
    <property type="entry name" value="ATP_PRibTrfase_cat"/>
</dbReference>
<dbReference type="InterPro" id="IPR018198">
    <property type="entry name" value="ATP_PRibTrfase_CS"/>
</dbReference>
<dbReference type="InterPro" id="IPR001348">
    <property type="entry name" value="ATP_PRibTrfase_HisG"/>
</dbReference>
<dbReference type="InterPro" id="IPR013115">
    <property type="entry name" value="HisG_C"/>
</dbReference>
<dbReference type="InterPro" id="IPR011322">
    <property type="entry name" value="N-reg_PII-like_a/b"/>
</dbReference>
<dbReference type="InterPro" id="IPR015867">
    <property type="entry name" value="N-reg_PII/ATP_PRibTrfase_C"/>
</dbReference>
<dbReference type="NCBIfam" id="TIGR00070">
    <property type="entry name" value="hisG"/>
    <property type="match status" value="1"/>
</dbReference>
<dbReference type="NCBIfam" id="TIGR03455">
    <property type="entry name" value="HisG_C-term"/>
    <property type="match status" value="1"/>
</dbReference>
<dbReference type="PANTHER" id="PTHR21403:SF8">
    <property type="entry name" value="ATP PHOSPHORIBOSYLTRANSFERASE"/>
    <property type="match status" value="1"/>
</dbReference>
<dbReference type="PANTHER" id="PTHR21403">
    <property type="entry name" value="ATP PHOSPHORIBOSYLTRANSFERASE ATP-PRTASE"/>
    <property type="match status" value="1"/>
</dbReference>
<dbReference type="Pfam" id="PF01634">
    <property type="entry name" value="HisG"/>
    <property type="match status" value="1"/>
</dbReference>
<dbReference type="Pfam" id="PF08029">
    <property type="entry name" value="HisG_C"/>
    <property type="match status" value="1"/>
</dbReference>
<dbReference type="SUPFAM" id="SSF54913">
    <property type="entry name" value="GlnB-like"/>
    <property type="match status" value="1"/>
</dbReference>
<dbReference type="SUPFAM" id="SSF53850">
    <property type="entry name" value="Periplasmic binding protein-like II"/>
    <property type="match status" value="1"/>
</dbReference>
<dbReference type="PROSITE" id="PS01316">
    <property type="entry name" value="ATP_P_PHORIBOSYLTR"/>
    <property type="match status" value="1"/>
</dbReference>
<comment type="function">
    <text evidence="1">Catalyzes the condensation of ATP and 5-phosphoribose 1-diphosphate to form N'-(5'-phosphoribosyl)-ATP (PR-ATP). Has a crucial role in the pathway because the rate of histidine biosynthesis seems to be controlled primarily by regulation of HisG enzymatic activity.</text>
</comment>
<comment type="catalytic activity">
    <reaction evidence="1">
        <text>1-(5-phospho-beta-D-ribosyl)-ATP + diphosphate = 5-phospho-alpha-D-ribose 1-diphosphate + ATP</text>
        <dbReference type="Rhea" id="RHEA:18473"/>
        <dbReference type="ChEBI" id="CHEBI:30616"/>
        <dbReference type="ChEBI" id="CHEBI:33019"/>
        <dbReference type="ChEBI" id="CHEBI:58017"/>
        <dbReference type="ChEBI" id="CHEBI:73183"/>
        <dbReference type="EC" id="2.4.2.17"/>
    </reaction>
</comment>
<comment type="cofactor">
    <cofactor evidence="1">
        <name>Mg(2+)</name>
        <dbReference type="ChEBI" id="CHEBI:18420"/>
    </cofactor>
</comment>
<comment type="activity regulation">
    <text evidence="1">Feedback inhibited by histidine.</text>
</comment>
<comment type="pathway">
    <text evidence="1">Amino-acid biosynthesis; L-histidine biosynthesis; L-histidine from 5-phospho-alpha-D-ribose 1-diphosphate: step 1/9.</text>
</comment>
<comment type="subunit">
    <text evidence="1">Equilibrium between an active dimeric form, an inactive hexameric form and higher aggregates. Interconversion between the various forms is largely reversible and is influenced by the natural substrates and inhibitors of the enzyme.</text>
</comment>
<comment type="subcellular location">
    <subcellularLocation>
        <location evidence="1">Cytoplasm</location>
    </subcellularLocation>
</comment>
<comment type="similarity">
    <text evidence="1">Belongs to the ATP phosphoribosyltransferase family. Long subfamily.</text>
</comment>
<evidence type="ECO:0000255" key="1">
    <source>
        <dbReference type="HAMAP-Rule" id="MF_00079"/>
    </source>
</evidence>
<sequence>MLDKTRLRIAMQKSGRLSDDSRELLARCGIKINLQQQRLIAFAENMPIDILRVRDDDIPGLVMDGVVDLGIIGENVLEEELLNRRAQGEDPRYFTLRRLDFGGCRLSLAMPLDEDYTGPECLQNKRIATSYPHLLKQYLDRKSVSFKSCLLNGSVEVAPRAGLADAICDLVSTGATLEANGLREVEVIYRSKACLIQRDGEMPAEKQQLIDKLLTRMQGVIQARESKYIMLHAPSERLEEVISLLPGAERPTILPLAGDQSRVAMHMVSSETLFWETMEKLKSLGASSILVLPIEKMME</sequence>
<name>HIS1_PECCP</name>
<keyword id="KW-0028">Amino-acid biosynthesis</keyword>
<keyword id="KW-0067">ATP-binding</keyword>
<keyword id="KW-0963">Cytoplasm</keyword>
<keyword id="KW-0328">Glycosyltransferase</keyword>
<keyword id="KW-0368">Histidine biosynthesis</keyword>
<keyword id="KW-0460">Magnesium</keyword>
<keyword id="KW-0479">Metal-binding</keyword>
<keyword id="KW-0547">Nucleotide-binding</keyword>
<keyword id="KW-0808">Transferase</keyword>
<accession>C6DF77</accession>
<gene>
    <name evidence="1" type="primary">hisG</name>
    <name type="ordered locus">PC1_1745</name>
</gene>
<proteinExistence type="inferred from homology"/>
<organism>
    <name type="scientific">Pectobacterium carotovorum subsp. carotovorum (strain PC1)</name>
    <dbReference type="NCBI Taxonomy" id="561230"/>
    <lineage>
        <taxon>Bacteria</taxon>
        <taxon>Pseudomonadati</taxon>
        <taxon>Pseudomonadota</taxon>
        <taxon>Gammaproteobacteria</taxon>
        <taxon>Enterobacterales</taxon>
        <taxon>Pectobacteriaceae</taxon>
        <taxon>Pectobacterium</taxon>
    </lineage>
</organism>